<organism>
    <name type="scientific">Yersinia pestis bv. Antiqua (strain Nepal516)</name>
    <dbReference type="NCBI Taxonomy" id="377628"/>
    <lineage>
        <taxon>Bacteria</taxon>
        <taxon>Pseudomonadati</taxon>
        <taxon>Pseudomonadota</taxon>
        <taxon>Gammaproteobacteria</taxon>
        <taxon>Enterobacterales</taxon>
        <taxon>Yersiniaceae</taxon>
        <taxon>Yersinia</taxon>
    </lineage>
</organism>
<reference key="1">
    <citation type="journal article" date="2006" name="J. Bacteriol.">
        <title>Complete genome sequence of Yersinia pestis strains Antiqua and Nepal516: evidence of gene reduction in an emerging pathogen.</title>
        <authorList>
            <person name="Chain P.S.G."/>
            <person name="Hu P."/>
            <person name="Malfatti S.A."/>
            <person name="Radnedge L."/>
            <person name="Larimer F."/>
            <person name="Vergez L.M."/>
            <person name="Worsham P."/>
            <person name="Chu M.C."/>
            <person name="Andersen G.L."/>
        </authorList>
    </citation>
    <scope>NUCLEOTIDE SEQUENCE [LARGE SCALE GENOMIC DNA]</scope>
    <source>
        <strain>Nepal516</strain>
    </source>
</reference>
<reference key="2">
    <citation type="submission" date="2009-04" db="EMBL/GenBank/DDBJ databases">
        <title>Yersinia pestis Nepal516A whole genome shotgun sequencing project.</title>
        <authorList>
            <person name="Plunkett G. III"/>
            <person name="Anderson B.D."/>
            <person name="Baumler D.J."/>
            <person name="Burland V."/>
            <person name="Cabot E.L."/>
            <person name="Glasner J.D."/>
            <person name="Mau B."/>
            <person name="Neeno-Eckwall E."/>
            <person name="Perna N.T."/>
            <person name="Munk A.C."/>
            <person name="Tapia R."/>
            <person name="Green L.D."/>
            <person name="Rogers Y.C."/>
            <person name="Detter J.C."/>
            <person name="Bruce D.C."/>
            <person name="Brettin T.S."/>
        </authorList>
    </citation>
    <scope>NUCLEOTIDE SEQUENCE [LARGE SCALE GENOMIC DNA]</scope>
    <source>
        <strain>Nepal516</strain>
    </source>
</reference>
<proteinExistence type="inferred from homology"/>
<keyword id="KW-0067">ATP-binding</keyword>
<keyword id="KW-0997">Cell inner membrane</keyword>
<keyword id="KW-1003">Cell membrane</keyword>
<keyword id="KW-0472">Membrane</keyword>
<keyword id="KW-0547">Nucleotide-binding</keyword>
<keyword id="KW-0762">Sugar transport</keyword>
<keyword id="KW-1278">Translocase</keyword>
<keyword id="KW-0813">Transport</keyword>
<protein>
    <recommendedName>
        <fullName evidence="1">Maltose/maltodextrin import ATP-binding protein MalK</fullName>
        <ecNumber evidence="1">7.5.2.1</ecNumber>
    </recommendedName>
</protein>
<comment type="function">
    <text evidence="1">Part of the ABC transporter complex MalEFGK involved in maltose/maltodextrin import. Responsible for energy coupling to the transport system.</text>
</comment>
<comment type="catalytic activity">
    <reaction evidence="1">
        <text>D-maltose(out) + ATP + H2O = D-maltose(in) + ADP + phosphate + H(+)</text>
        <dbReference type="Rhea" id="RHEA:22132"/>
        <dbReference type="ChEBI" id="CHEBI:15377"/>
        <dbReference type="ChEBI" id="CHEBI:15378"/>
        <dbReference type="ChEBI" id="CHEBI:17306"/>
        <dbReference type="ChEBI" id="CHEBI:30616"/>
        <dbReference type="ChEBI" id="CHEBI:43474"/>
        <dbReference type="ChEBI" id="CHEBI:456216"/>
        <dbReference type="EC" id="7.5.2.1"/>
    </reaction>
</comment>
<comment type="subunit">
    <text evidence="1">The complex is composed of two ATP-binding proteins (MalK), two transmembrane proteins (MalG and MalK) and a solute-binding protein (MalE).</text>
</comment>
<comment type="subcellular location">
    <subcellularLocation>
        <location evidence="1">Cell inner membrane</location>
        <topology evidence="1">Peripheral membrane protein</topology>
    </subcellularLocation>
</comment>
<comment type="similarity">
    <text evidence="1">Belongs to the ABC transporter superfamily. Maltooligosaccharide importer (TC 3.A.1.1.1) family.</text>
</comment>
<dbReference type="EC" id="7.5.2.1" evidence="1"/>
<dbReference type="EMBL" id="CP000305">
    <property type="protein sequence ID" value="ABG16362.1"/>
    <property type="molecule type" value="Genomic_DNA"/>
</dbReference>
<dbReference type="EMBL" id="ACNQ01000019">
    <property type="protein sequence ID" value="EEO74948.1"/>
    <property type="molecule type" value="Genomic_DNA"/>
</dbReference>
<dbReference type="RefSeq" id="WP_002212091.1">
    <property type="nucleotide sequence ID" value="NZ_ACNQ01000019.1"/>
</dbReference>
<dbReference type="SMR" id="Q1CNR8"/>
<dbReference type="GeneID" id="96663134"/>
<dbReference type="KEGG" id="ypn:YPN_0029"/>
<dbReference type="HOGENOM" id="CLU_000604_1_1_6"/>
<dbReference type="Proteomes" id="UP000008936">
    <property type="component" value="Chromosome"/>
</dbReference>
<dbReference type="GO" id="GO:0055052">
    <property type="term" value="C:ATP-binding cassette (ABC) transporter complex, substrate-binding subunit-containing"/>
    <property type="evidence" value="ECO:0007669"/>
    <property type="project" value="TreeGrafter"/>
</dbReference>
<dbReference type="GO" id="GO:1990060">
    <property type="term" value="C:maltose transport complex"/>
    <property type="evidence" value="ECO:0007669"/>
    <property type="project" value="TreeGrafter"/>
</dbReference>
<dbReference type="GO" id="GO:0015423">
    <property type="term" value="F:ABC-type maltose transporter activity"/>
    <property type="evidence" value="ECO:0007669"/>
    <property type="project" value="UniProtKB-EC"/>
</dbReference>
<dbReference type="GO" id="GO:0005524">
    <property type="term" value="F:ATP binding"/>
    <property type="evidence" value="ECO:0007669"/>
    <property type="project" value="UniProtKB-KW"/>
</dbReference>
<dbReference type="GO" id="GO:0016887">
    <property type="term" value="F:ATP hydrolysis activity"/>
    <property type="evidence" value="ECO:0007669"/>
    <property type="project" value="InterPro"/>
</dbReference>
<dbReference type="CDD" id="cd03301">
    <property type="entry name" value="ABC_MalK_N"/>
    <property type="match status" value="1"/>
</dbReference>
<dbReference type="FunFam" id="3.40.50.300:FF:000042">
    <property type="entry name" value="Maltose/maltodextrin ABC transporter, ATP-binding protein"/>
    <property type="match status" value="1"/>
</dbReference>
<dbReference type="FunFam" id="2.40.50.100:FF:000014">
    <property type="entry name" value="Maltose/maltodextrin import ATP-binding protein MalK"/>
    <property type="match status" value="1"/>
</dbReference>
<dbReference type="Gene3D" id="2.40.50.100">
    <property type="match status" value="1"/>
</dbReference>
<dbReference type="Gene3D" id="2.40.50.140">
    <property type="entry name" value="Nucleic acid-binding proteins"/>
    <property type="match status" value="1"/>
</dbReference>
<dbReference type="Gene3D" id="3.40.50.300">
    <property type="entry name" value="P-loop containing nucleotide triphosphate hydrolases"/>
    <property type="match status" value="1"/>
</dbReference>
<dbReference type="InterPro" id="IPR003593">
    <property type="entry name" value="AAA+_ATPase"/>
</dbReference>
<dbReference type="InterPro" id="IPR003439">
    <property type="entry name" value="ABC_transporter-like_ATP-bd"/>
</dbReference>
<dbReference type="InterPro" id="IPR017871">
    <property type="entry name" value="ABC_transporter-like_CS"/>
</dbReference>
<dbReference type="InterPro" id="IPR015855">
    <property type="entry name" value="ABC_transpr_MalK-like"/>
</dbReference>
<dbReference type="InterPro" id="IPR047641">
    <property type="entry name" value="ABC_transpr_MalK/UgpC-like"/>
</dbReference>
<dbReference type="InterPro" id="IPR008995">
    <property type="entry name" value="Mo/tungstate-bd_C_term_dom"/>
</dbReference>
<dbReference type="InterPro" id="IPR012340">
    <property type="entry name" value="NA-bd_OB-fold"/>
</dbReference>
<dbReference type="InterPro" id="IPR040582">
    <property type="entry name" value="OB_MalK-like"/>
</dbReference>
<dbReference type="InterPro" id="IPR027417">
    <property type="entry name" value="P-loop_NTPase"/>
</dbReference>
<dbReference type="NCBIfam" id="NF008233">
    <property type="entry name" value="PRK11000.1"/>
    <property type="match status" value="1"/>
</dbReference>
<dbReference type="NCBIfam" id="NF008653">
    <property type="entry name" value="PRK11650.1"/>
    <property type="match status" value="1"/>
</dbReference>
<dbReference type="PANTHER" id="PTHR43875">
    <property type="entry name" value="MALTODEXTRIN IMPORT ATP-BINDING PROTEIN MSMX"/>
    <property type="match status" value="1"/>
</dbReference>
<dbReference type="PANTHER" id="PTHR43875:SF3">
    <property type="entry name" value="MALTOSE_MALTODEXTRIN IMPORT ATP-BINDING PROTEIN MALK"/>
    <property type="match status" value="1"/>
</dbReference>
<dbReference type="Pfam" id="PF00005">
    <property type="entry name" value="ABC_tran"/>
    <property type="match status" value="1"/>
</dbReference>
<dbReference type="Pfam" id="PF17912">
    <property type="entry name" value="OB_MalK"/>
    <property type="match status" value="1"/>
</dbReference>
<dbReference type="SMART" id="SM00382">
    <property type="entry name" value="AAA"/>
    <property type="match status" value="1"/>
</dbReference>
<dbReference type="SUPFAM" id="SSF50331">
    <property type="entry name" value="MOP-like"/>
    <property type="match status" value="1"/>
</dbReference>
<dbReference type="SUPFAM" id="SSF52540">
    <property type="entry name" value="P-loop containing nucleoside triphosphate hydrolases"/>
    <property type="match status" value="1"/>
</dbReference>
<dbReference type="PROSITE" id="PS00211">
    <property type="entry name" value="ABC_TRANSPORTER_1"/>
    <property type="match status" value="1"/>
</dbReference>
<dbReference type="PROSITE" id="PS50893">
    <property type="entry name" value="ABC_TRANSPORTER_2"/>
    <property type="match status" value="1"/>
</dbReference>
<dbReference type="PROSITE" id="PS51245">
    <property type="entry name" value="MALK"/>
    <property type="match status" value="1"/>
</dbReference>
<accession>Q1CNR8</accession>
<accession>D1Q345</accession>
<feature type="chain" id="PRO_0000274003" description="Maltose/maltodextrin import ATP-binding protein MalK">
    <location>
        <begin position="1"/>
        <end position="369"/>
    </location>
</feature>
<feature type="domain" description="ABC transporter" evidence="1">
    <location>
        <begin position="4"/>
        <end position="234"/>
    </location>
</feature>
<feature type="binding site" evidence="1">
    <location>
        <begin position="36"/>
        <end position="43"/>
    </location>
    <ligand>
        <name>ATP</name>
        <dbReference type="ChEBI" id="CHEBI:30616"/>
    </ligand>
</feature>
<sequence length="369" mass="40839">MANVTLSSVYKAFGEAVISRDINLEIDDGEFVVFVGPSGCGKSTLLRMIAGLEDITSGELLIGGKRMNEVPPSERGIGMVFQSYALYPHLSVAENMSFGLKLAGVKKAEIYQRVNQVAEVLQLAHLLDRRPKALSGGQRQRVAIGRTLVSEPDVFLLDEPLSNLDAALRVQMRIEISRLHKRLERTMIYVTHDQVEAMTLADKIVVLDAGNIAQVGKPLELYHYPANRFVAGFIGSPKMNFLPVKVTAAEPRQVQIELPNHQRVWLPVEGDQVQVGANMSLGIRPEHLLPSSASEVTLEGEIQVVEQLGNETQIHIQIPAIRQNLVYRQNDVVLVEEGATFSIGLPPHRCHLFREDGTACKRLYQELGV</sequence>
<name>MALK_YERPN</name>
<gene>
    <name evidence="1" type="primary">malK</name>
    <name type="ordered locus">YPN_0029</name>
    <name type="ORF">YP516_4565</name>
</gene>
<evidence type="ECO:0000255" key="1">
    <source>
        <dbReference type="HAMAP-Rule" id="MF_01709"/>
    </source>
</evidence>